<protein>
    <recommendedName>
        <fullName evidence="1">Nucleoside diphosphate kinase</fullName>
        <shortName evidence="1">NDK</shortName>
        <shortName evidence="1">NDP kinase</shortName>
        <ecNumber evidence="1">2.7.4.6</ecNumber>
    </recommendedName>
    <alternativeName>
        <fullName evidence="1">Nucleoside-2-P kinase</fullName>
    </alternativeName>
</protein>
<proteinExistence type="inferred from homology"/>
<evidence type="ECO:0000255" key="1">
    <source>
        <dbReference type="HAMAP-Rule" id="MF_00451"/>
    </source>
</evidence>
<comment type="function">
    <text evidence="1">Major role in the synthesis of nucleoside triphosphates other than ATP. The ATP gamma phosphate is transferred to the NDP beta phosphate via a ping-pong mechanism, using a phosphorylated active-site intermediate.</text>
</comment>
<comment type="catalytic activity">
    <reaction evidence="1">
        <text>a 2'-deoxyribonucleoside 5'-diphosphate + ATP = a 2'-deoxyribonucleoside 5'-triphosphate + ADP</text>
        <dbReference type="Rhea" id="RHEA:44640"/>
        <dbReference type="ChEBI" id="CHEBI:30616"/>
        <dbReference type="ChEBI" id="CHEBI:61560"/>
        <dbReference type="ChEBI" id="CHEBI:73316"/>
        <dbReference type="ChEBI" id="CHEBI:456216"/>
        <dbReference type="EC" id="2.7.4.6"/>
    </reaction>
</comment>
<comment type="catalytic activity">
    <reaction evidence="1">
        <text>a ribonucleoside 5'-diphosphate + ATP = a ribonucleoside 5'-triphosphate + ADP</text>
        <dbReference type="Rhea" id="RHEA:18113"/>
        <dbReference type="ChEBI" id="CHEBI:30616"/>
        <dbReference type="ChEBI" id="CHEBI:57930"/>
        <dbReference type="ChEBI" id="CHEBI:61557"/>
        <dbReference type="ChEBI" id="CHEBI:456216"/>
        <dbReference type="EC" id="2.7.4.6"/>
    </reaction>
</comment>
<comment type="cofactor">
    <cofactor evidence="1">
        <name>Mg(2+)</name>
        <dbReference type="ChEBI" id="CHEBI:18420"/>
    </cofactor>
</comment>
<comment type="subunit">
    <text evidence="1">Homotetramer.</text>
</comment>
<comment type="subcellular location">
    <subcellularLocation>
        <location evidence="1">Cytoplasm</location>
    </subcellularLocation>
</comment>
<comment type="similarity">
    <text evidence="1">Belongs to the NDK family.</text>
</comment>
<reference key="1">
    <citation type="submission" date="2006-08" db="EMBL/GenBank/DDBJ databases">
        <title>Complete sequence of Shewanella sp. MR-4.</title>
        <authorList>
            <consortium name="US DOE Joint Genome Institute"/>
            <person name="Copeland A."/>
            <person name="Lucas S."/>
            <person name="Lapidus A."/>
            <person name="Barry K."/>
            <person name="Detter J.C."/>
            <person name="Glavina del Rio T."/>
            <person name="Hammon N."/>
            <person name="Israni S."/>
            <person name="Dalin E."/>
            <person name="Tice H."/>
            <person name="Pitluck S."/>
            <person name="Kiss H."/>
            <person name="Brettin T."/>
            <person name="Bruce D."/>
            <person name="Han C."/>
            <person name="Tapia R."/>
            <person name="Gilna P."/>
            <person name="Schmutz J."/>
            <person name="Larimer F."/>
            <person name="Land M."/>
            <person name="Hauser L."/>
            <person name="Kyrpides N."/>
            <person name="Mikhailova N."/>
            <person name="Nealson K."/>
            <person name="Konstantinidis K."/>
            <person name="Klappenbach J."/>
            <person name="Tiedje J."/>
            <person name="Richardson P."/>
        </authorList>
    </citation>
    <scope>NUCLEOTIDE SEQUENCE [LARGE SCALE GENOMIC DNA]</scope>
    <source>
        <strain>MR-4</strain>
    </source>
</reference>
<sequence>MAIERTFSIIKPDAVAKNHIGAIYNRFETAGLKIVAAKMLHLTKEQAEGFYAEHSERGFFGALVAFMTSGPIMVQVLEGENAVLAHREILGATNPAQAAPGTIRADFAQSIDENAAHGSDSLESAAREIAYFFSAEELCPRTR</sequence>
<gene>
    <name evidence="1" type="primary">ndk</name>
    <name type="ordered locus">Shewmr4_1747</name>
</gene>
<dbReference type="EC" id="2.7.4.6" evidence="1"/>
<dbReference type="EMBL" id="CP000446">
    <property type="protein sequence ID" value="ABI38821.1"/>
    <property type="molecule type" value="Genomic_DNA"/>
</dbReference>
<dbReference type="RefSeq" id="WP_011622518.1">
    <property type="nucleotide sequence ID" value="NC_008321.1"/>
</dbReference>
<dbReference type="SMR" id="Q0HJE6"/>
<dbReference type="KEGG" id="she:Shewmr4_1747"/>
<dbReference type="HOGENOM" id="CLU_060216_8_1_6"/>
<dbReference type="GO" id="GO:0005737">
    <property type="term" value="C:cytoplasm"/>
    <property type="evidence" value="ECO:0007669"/>
    <property type="project" value="UniProtKB-SubCell"/>
</dbReference>
<dbReference type="GO" id="GO:0005524">
    <property type="term" value="F:ATP binding"/>
    <property type="evidence" value="ECO:0007669"/>
    <property type="project" value="UniProtKB-UniRule"/>
</dbReference>
<dbReference type="GO" id="GO:0046872">
    <property type="term" value="F:metal ion binding"/>
    <property type="evidence" value="ECO:0007669"/>
    <property type="project" value="UniProtKB-KW"/>
</dbReference>
<dbReference type="GO" id="GO:0004550">
    <property type="term" value="F:nucleoside diphosphate kinase activity"/>
    <property type="evidence" value="ECO:0007669"/>
    <property type="project" value="UniProtKB-UniRule"/>
</dbReference>
<dbReference type="GO" id="GO:0006241">
    <property type="term" value="P:CTP biosynthetic process"/>
    <property type="evidence" value="ECO:0007669"/>
    <property type="project" value="UniProtKB-UniRule"/>
</dbReference>
<dbReference type="GO" id="GO:0006183">
    <property type="term" value="P:GTP biosynthetic process"/>
    <property type="evidence" value="ECO:0007669"/>
    <property type="project" value="UniProtKB-UniRule"/>
</dbReference>
<dbReference type="GO" id="GO:0006228">
    <property type="term" value="P:UTP biosynthetic process"/>
    <property type="evidence" value="ECO:0007669"/>
    <property type="project" value="UniProtKB-UniRule"/>
</dbReference>
<dbReference type="CDD" id="cd04413">
    <property type="entry name" value="NDPk_I"/>
    <property type="match status" value="1"/>
</dbReference>
<dbReference type="FunFam" id="3.30.70.141:FF:000001">
    <property type="entry name" value="Nucleoside diphosphate kinase"/>
    <property type="match status" value="1"/>
</dbReference>
<dbReference type="Gene3D" id="3.30.70.141">
    <property type="entry name" value="Nucleoside diphosphate kinase-like domain"/>
    <property type="match status" value="1"/>
</dbReference>
<dbReference type="HAMAP" id="MF_00451">
    <property type="entry name" value="NDP_kinase"/>
    <property type="match status" value="1"/>
</dbReference>
<dbReference type="InterPro" id="IPR034907">
    <property type="entry name" value="NDK-like_dom"/>
</dbReference>
<dbReference type="InterPro" id="IPR036850">
    <property type="entry name" value="NDK-like_dom_sf"/>
</dbReference>
<dbReference type="InterPro" id="IPR001564">
    <property type="entry name" value="Nucleoside_diP_kinase"/>
</dbReference>
<dbReference type="InterPro" id="IPR023005">
    <property type="entry name" value="Nucleoside_diP_kinase_AS"/>
</dbReference>
<dbReference type="NCBIfam" id="NF001908">
    <property type="entry name" value="PRK00668.1"/>
    <property type="match status" value="1"/>
</dbReference>
<dbReference type="PANTHER" id="PTHR46161">
    <property type="entry name" value="NUCLEOSIDE DIPHOSPHATE KINASE"/>
    <property type="match status" value="1"/>
</dbReference>
<dbReference type="PANTHER" id="PTHR46161:SF3">
    <property type="entry name" value="NUCLEOSIDE DIPHOSPHATE KINASE DDB_G0292928-RELATED"/>
    <property type="match status" value="1"/>
</dbReference>
<dbReference type="Pfam" id="PF00334">
    <property type="entry name" value="NDK"/>
    <property type="match status" value="1"/>
</dbReference>
<dbReference type="PRINTS" id="PR01243">
    <property type="entry name" value="NUCDPKINASE"/>
</dbReference>
<dbReference type="SMART" id="SM00562">
    <property type="entry name" value="NDK"/>
    <property type="match status" value="1"/>
</dbReference>
<dbReference type="SUPFAM" id="SSF54919">
    <property type="entry name" value="Nucleoside diphosphate kinase, NDK"/>
    <property type="match status" value="1"/>
</dbReference>
<dbReference type="PROSITE" id="PS00469">
    <property type="entry name" value="NDPK"/>
    <property type="match status" value="1"/>
</dbReference>
<dbReference type="PROSITE" id="PS51374">
    <property type="entry name" value="NDPK_LIKE"/>
    <property type="match status" value="1"/>
</dbReference>
<accession>Q0HJE6</accession>
<keyword id="KW-0067">ATP-binding</keyword>
<keyword id="KW-0963">Cytoplasm</keyword>
<keyword id="KW-0418">Kinase</keyword>
<keyword id="KW-0460">Magnesium</keyword>
<keyword id="KW-0479">Metal-binding</keyword>
<keyword id="KW-0546">Nucleotide metabolism</keyword>
<keyword id="KW-0547">Nucleotide-binding</keyword>
<keyword id="KW-0597">Phosphoprotein</keyword>
<keyword id="KW-0808">Transferase</keyword>
<feature type="chain" id="PRO_0000267802" description="Nucleoside diphosphate kinase">
    <location>
        <begin position="1"/>
        <end position="143"/>
    </location>
</feature>
<feature type="active site" description="Pros-phosphohistidine intermediate" evidence="1">
    <location>
        <position position="117"/>
    </location>
</feature>
<feature type="binding site" evidence="1">
    <location>
        <position position="11"/>
    </location>
    <ligand>
        <name>ATP</name>
        <dbReference type="ChEBI" id="CHEBI:30616"/>
    </ligand>
</feature>
<feature type="binding site" evidence="1">
    <location>
        <position position="59"/>
    </location>
    <ligand>
        <name>ATP</name>
        <dbReference type="ChEBI" id="CHEBI:30616"/>
    </ligand>
</feature>
<feature type="binding site" evidence="1">
    <location>
        <position position="87"/>
    </location>
    <ligand>
        <name>ATP</name>
        <dbReference type="ChEBI" id="CHEBI:30616"/>
    </ligand>
</feature>
<feature type="binding site" evidence="1">
    <location>
        <position position="93"/>
    </location>
    <ligand>
        <name>ATP</name>
        <dbReference type="ChEBI" id="CHEBI:30616"/>
    </ligand>
</feature>
<feature type="binding site" evidence="1">
    <location>
        <position position="104"/>
    </location>
    <ligand>
        <name>ATP</name>
        <dbReference type="ChEBI" id="CHEBI:30616"/>
    </ligand>
</feature>
<feature type="binding site" evidence="1">
    <location>
        <position position="114"/>
    </location>
    <ligand>
        <name>ATP</name>
        <dbReference type="ChEBI" id="CHEBI:30616"/>
    </ligand>
</feature>
<organism>
    <name type="scientific">Shewanella sp. (strain MR-4)</name>
    <dbReference type="NCBI Taxonomy" id="60480"/>
    <lineage>
        <taxon>Bacteria</taxon>
        <taxon>Pseudomonadati</taxon>
        <taxon>Pseudomonadota</taxon>
        <taxon>Gammaproteobacteria</taxon>
        <taxon>Alteromonadales</taxon>
        <taxon>Shewanellaceae</taxon>
        <taxon>Shewanella</taxon>
    </lineage>
</organism>
<name>NDK_SHESM</name>